<feature type="chain" id="PRO_0000209396" description="D-glycero-alpha-D-manno-heptose-1,7-bisphosphate 7-phosphatase">
    <location>
        <begin position="1"/>
        <end position="190"/>
    </location>
</feature>
<feature type="active site" description="Nucleophile" evidence="1">
    <location>
        <position position="15"/>
    </location>
</feature>
<feature type="active site" description="Proton donor" evidence="1">
    <location>
        <position position="17"/>
    </location>
</feature>
<feature type="binding site" evidence="1">
    <location>
        <begin position="15"/>
        <end position="17"/>
    </location>
    <ligand>
        <name>substrate</name>
    </ligand>
</feature>
<feature type="binding site" evidence="2">
    <location>
        <position position="15"/>
    </location>
    <ligand>
        <name>Mg(2+)</name>
        <dbReference type="ChEBI" id="CHEBI:18420"/>
    </ligand>
</feature>
<feature type="binding site" evidence="2">
    <location>
        <position position="17"/>
    </location>
    <ligand>
        <name>Mg(2+)</name>
        <dbReference type="ChEBI" id="CHEBI:18420"/>
    </ligand>
</feature>
<feature type="binding site" evidence="1">
    <location>
        <begin position="23"/>
        <end position="28"/>
    </location>
    <ligand>
        <name>substrate</name>
    </ligand>
</feature>
<feature type="binding site" evidence="1">
    <location>
        <begin position="59"/>
        <end position="62"/>
    </location>
    <ligand>
        <name>substrate</name>
    </ligand>
</feature>
<feature type="binding site" evidence="2">
    <location>
        <position position="98"/>
    </location>
    <ligand>
        <name>Zn(2+)</name>
        <dbReference type="ChEBI" id="CHEBI:29105"/>
    </ligand>
</feature>
<feature type="binding site" evidence="2">
    <location>
        <position position="100"/>
    </location>
    <ligand>
        <name>Zn(2+)</name>
        <dbReference type="ChEBI" id="CHEBI:29105"/>
    </ligand>
</feature>
<feature type="binding site" evidence="2">
    <location>
        <position position="106"/>
    </location>
    <ligand>
        <name>Zn(2+)</name>
        <dbReference type="ChEBI" id="CHEBI:29105"/>
    </ligand>
</feature>
<feature type="binding site" evidence="2">
    <location>
        <position position="108"/>
    </location>
    <ligand>
        <name>Zn(2+)</name>
        <dbReference type="ChEBI" id="CHEBI:29105"/>
    </ligand>
</feature>
<feature type="binding site" evidence="1">
    <location>
        <begin position="109"/>
        <end position="110"/>
    </location>
    <ligand>
        <name>substrate</name>
    </ligand>
</feature>
<feature type="binding site" evidence="2">
    <location>
        <position position="136"/>
    </location>
    <ligand>
        <name>Mg(2+)</name>
        <dbReference type="ChEBI" id="CHEBI:18420"/>
    </ligand>
</feature>
<feature type="site" description="Stabilizes the phosphoryl group" evidence="1">
    <location>
        <position position="59"/>
    </location>
</feature>
<feature type="site" description="Contributes to substrate recognition" evidence="1">
    <location>
        <position position="109"/>
    </location>
</feature>
<feature type="site" description="Stabilizes the phosphoryl group" evidence="1">
    <location>
        <position position="110"/>
    </location>
</feature>
<name>GMHBA_MYCBO</name>
<dbReference type="EC" id="3.1.3.83"/>
<dbReference type="EMBL" id="LT708304">
    <property type="protein sequence ID" value="SIT98525.1"/>
    <property type="molecule type" value="Genomic_DNA"/>
</dbReference>
<dbReference type="RefSeq" id="NP_853785.1">
    <property type="nucleotide sequence ID" value="NC_002945.3"/>
</dbReference>
<dbReference type="RefSeq" id="WP_010950343.1">
    <property type="nucleotide sequence ID" value="NC_002945.4"/>
</dbReference>
<dbReference type="SMR" id="Q7U2U1"/>
<dbReference type="UniPathway" id="UPA00543">
    <property type="reaction ID" value="UER00607"/>
</dbReference>
<dbReference type="Proteomes" id="UP000001419">
    <property type="component" value="Chromosome"/>
</dbReference>
<dbReference type="GO" id="GO:0005737">
    <property type="term" value="C:cytoplasm"/>
    <property type="evidence" value="ECO:0007669"/>
    <property type="project" value="UniProtKB-SubCell"/>
</dbReference>
<dbReference type="GO" id="GO:0034200">
    <property type="term" value="F:D-glycero-beta-D-manno-heptose 1,7-bisphosphate 7-phosphatase activity"/>
    <property type="evidence" value="ECO:0000250"/>
    <property type="project" value="UniProtKB"/>
</dbReference>
<dbReference type="GO" id="GO:0000287">
    <property type="term" value="F:magnesium ion binding"/>
    <property type="evidence" value="ECO:0000250"/>
    <property type="project" value="UniProtKB"/>
</dbReference>
<dbReference type="GO" id="GO:0008270">
    <property type="term" value="F:zinc ion binding"/>
    <property type="evidence" value="ECO:0000250"/>
    <property type="project" value="UniProtKB"/>
</dbReference>
<dbReference type="GO" id="GO:0005975">
    <property type="term" value="P:carbohydrate metabolic process"/>
    <property type="evidence" value="ECO:0007669"/>
    <property type="project" value="InterPro"/>
</dbReference>
<dbReference type="CDD" id="cd07503">
    <property type="entry name" value="HAD_HisB-N"/>
    <property type="match status" value="1"/>
</dbReference>
<dbReference type="Gene3D" id="3.40.50.1000">
    <property type="entry name" value="HAD superfamily/HAD-like"/>
    <property type="match status" value="1"/>
</dbReference>
<dbReference type="InterPro" id="IPR036412">
    <property type="entry name" value="HAD-like_sf"/>
</dbReference>
<dbReference type="InterPro" id="IPR006549">
    <property type="entry name" value="HAD-SF_hydro_IIIA"/>
</dbReference>
<dbReference type="InterPro" id="IPR023214">
    <property type="entry name" value="HAD_sf"/>
</dbReference>
<dbReference type="InterPro" id="IPR004446">
    <property type="entry name" value="Heptose_bisP_phosphatase"/>
</dbReference>
<dbReference type="InterPro" id="IPR006543">
    <property type="entry name" value="Histidinol-phos"/>
</dbReference>
<dbReference type="NCBIfam" id="TIGR01662">
    <property type="entry name" value="HAD-SF-IIIA"/>
    <property type="match status" value="1"/>
</dbReference>
<dbReference type="NCBIfam" id="TIGR01656">
    <property type="entry name" value="Histidinol-ppas"/>
    <property type="match status" value="1"/>
</dbReference>
<dbReference type="PANTHER" id="PTHR42891">
    <property type="entry name" value="D-GLYCERO-BETA-D-MANNO-HEPTOSE-1,7-BISPHOSPHATE 7-PHOSPHATASE"/>
    <property type="match status" value="1"/>
</dbReference>
<dbReference type="PANTHER" id="PTHR42891:SF1">
    <property type="entry name" value="D-GLYCERO-BETA-D-MANNO-HEPTOSE-1,7-BISPHOSPHATE 7-PHOSPHATASE"/>
    <property type="match status" value="1"/>
</dbReference>
<dbReference type="SUPFAM" id="SSF56784">
    <property type="entry name" value="HAD-like"/>
    <property type="match status" value="1"/>
</dbReference>
<protein>
    <recommendedName>
        <fullName>D-glycero-alpha-D-manno-heptose-1,7-bisphosphate 7-phosphatase</fullName>
        <ecNumber>3.1.3.83</ecNumber>
    </recommendedName>
    <alternativeName>
        <fullName>D,D-heptose 1,7-bisphosphate phosphatase</fullName>
        <shortName>HBP phosphatase</shortName>
    </alternativeName>
</protein>
<comment type="function">
    <text evidence="1">Converts the D-glycero-alpha-D-manno-heptose 1,7-bisphosphate intermediate into D-glycero-alpha-D-manno-heptose 1-phosphate by removing the phosphate group at the C-7 position.</text>
</comment>
<comment type="catalytic activity">
    <reaction>
        <text>D-glycero-alpha-D-manno-heptose 1,7-bisphosphate + H2O = D-glycero-alpha-D-manno-heptose 1-phosphate + phosphate</text>
        <dbReference type="Rhea" id="RHEA:28522"/>
        <dbReference type="ChEBI" id="CHEBI:15377"/>
        <dbReference type="ChEBI" id="CHEBI:43474"/>
        <dbReference type="ChEBI" id="CHEBI:60207"/>
        <dbReference type="ChEBI" id="CHEBI:61574"/>
        <dbReference type="EC" id="3.1.3.83"/>
    </reaction>
</comment>
<comment type="cofactor">
    <cofactor evidence="1">
        <name>Mg(2+)</name>
        <dbReference type="ChEBI" id="CHEBI:18420"/>
    </cofactor>
</comment>
<comment type="cofactor">
    <cofactor evidence="1">
        <name>Zn(2+)</name>
        <dbReference type="ChEBI" id="CHEBI:29105"/>
    </cofactor>
</comment>
<comment type="pathway">
    <text>Nucleotide-sugar biosynthesis; GDP-D-glycero-alpha-D-manno-heptose biosynthesis; GDP-D-glycero-alpha-D-manno-heptose from D-glycero-alpha-D-manno-heptose 7-phosphate: step 2/3.</text>
</comment>
<comment type="subunit">
    <text evidence="1">Monomer.</text>
</comment>
<comment type="subcellular location">
    <subcellularLocation>
        <location evidence="1">Cytoplasm</location>
    </subcellularLocation>
</comment>
<comment type="similarity">
    <text evidence="3">Belongs to the GmhB family.</text>
</comment>
<organism>
    <name type="scientific">Mycobacterium bovis (strain ATCC BAA-935 / AF2122/97)</name>
    <dbReference type="NCBI Taxonomy" id="233413"/>
    <lineage>
        <taxon>Bacteria</taxon>
        <taxon>Bacillati</taxon>
        <taxon>Actinomycetota</taxon>
        <taxon>Actinomycetes</taxon>
        <taxon>Mycobacteriales</taxon>
        <taxon>Mycobacteriaceae</taxon>
        <taxon>Mycobacterium</taxon>
        <taxon>Mycobacterium tuberculosis complex</taxon>
    </lineage>
</organism>
<evidence type="ECO:0000250" key="1"/>
<evidence type="ECO:0000250" key="2">
    <source>
        <dbReference type="UniProtKB" id="Q7WG29"/>
    </source>
</evidence>
<evidence type="ECO:0000305" key="3"/>
<accession>Q7U2U1</accession>
<accession>A0A1R3XVI5</accession>
<accession>X2BE37</accession>
<gene>
    <name type="primary">gmhB</name>
    <name type="ordered locus">BQ2027_MB0118</name>
</gene>
<reference key="1">
    <citation type="journal article" date="2003" name="Proc. Natl. Acad. Sci. U.S.A.">
        <title>The complete genome sequence of Mycobacterium bovis.</title>
        <authorList>
            <person name="Garnier T."/>
            <person name="Eiglmeier K."/>
            <person name="Camus J.-C."/>
            <person name="Medina N."/>
            <person name="Mansoor H."/>
            <person name="Pryor M."/>
            <person name="Duthoy S."/>
            <person name="Grondin S."/>
            <person name="Lacroix C."/>
            <person name="Monsempe C."/>
            <person name="Simon S."/>
            <person name="Harris B."/>
            <person name="Atkin R."/>
            <person name="Doggett J."/>
            <person name="Mayes R."/>
            <person name="Keating L."/>
            <person name="Wheeler P.R."/>
            <person name="Parkhill J."/>
            <person name="Barrell B.G."/>
            <person name="Cole S.T."/>
            <person name="Gordon S.V."/>
            <person name="Hewinson R.G."/>
        </authorList>
    </citation>
    <scope>NUCLEOTIDE SEQUENCE [LARGE SCALE GENOMIC DNA]</scope>
    <source>
        <strain>ATCC BAA-935 / AF2122/97</strain>
    </source>
</reference>
<reference key="2">
    <citation type="journal article" date="2017" name="Genome Announc.">
        <title>Updated reference genome sequence and annotation of Mycobacterium bovis AF2122/97.</title>
        <authorList>
            <person name="Malone K.M."/>
            <person name="Farrell D."/>
            <person name="Stuber T.P."/>
            <person name="Schubert O.T."/>
            <person name="Aebersold R."/>
            <person name="Robbe-Austerman S."/>
            <person name="Gordon S.V."/>
        </authorList>
    </citation>
    <scope>NUCLEOTIDE SEQUENCE [LARGE SCALE GENOMIC DNA]</scope>
    <scope>GENOME REANNOTATION</scope>
    <source>
        <strain>ATCC BAA-935 / AF2122/97</strain>
    </source>
</reference>
<sequence length="190" mass="20611">MVAERAGHQWCLFLDRDGVINRQVVGDYVRNWRQFEWLPGAARALKKLRAWAPYIVVVTNQQGVGAGLMSAVDVMVIHRHLQMQLASDGVLIDGFQVCPHHRSQRCGCRKPRPGLVLDWLRRHPDSEPLLSIVVGDSLSDLELAHNVAAAAGACASVQIGGASSGGVADASFDSLWEFAVAVGHARGERG</sequence>
<keyword id="KW-0119">Carbohydrate metabolism</keyword>
<keyword id="KW-0963">Cytoplasm</keyword>
<keyword id="KW-0378">Hydrolase</keyword>
<keyword id="KW-0460">Magnesium</keyword>
<keyword id="KW-0479">Metal-binding</keyword>
<keyword id="KW-1185">Reference proteome</keyword>
<keyword id="KW-0862">Zinc</keyword>
<proteinExistence type="inferred from homology"/>